<sequence>MAQEQKQPRKSSEADEAVEAVAETDVSERKEALDSDVDDILDEIDDVLETNAEDFVKSFIQKGGE</sequence>
<feature type="chain" id="PRO_0000390602" description="Prokaryotic ubiquitin-like protein Pup">
    <location>
        <begin position="1"/>
        <end position="65"/>
    </location>
</feature>
<feature type="region of interest" description="Disordered" evidence="2">
    <location>
        <begin position="1"/>
        <end position="34"/>
    </location>
</feature>
<feature type="region of interest" description="ARC ATPase binding" evidence="1">
    <location>
        <begin position="21"/>
        <end position="59"/>
    </location>
</feature>
<feature type="coiled-coil region" evidence="1">
    <location>
        <begin position="25"/>
        <end position="49"/>
    </location>
</feature>
<feature type="compositionally biased region" description="Basic and acidic residues" evidence="2">
    <location>
        <begin position="1"/>
        <end position="13"/>
    </location>
</feature>
<feature type="cross-link" description="Isoglutamyl lysine isopeptide (Glu-Lys) (interchain with K-? in acceptor proteins)" evidence="1">
    <location>
        <position position="65"/>
    </location>
</feature>
<organism>
    <name type="scientific">Nocardioides sp. (strain ATCC BAA-499 / JS614)</name>
    <dbReference type="NCBI Taxonomy" id="196162"/>
    <lineage>
        <taxon>Bacteria</taxon>
        <taxon>Bacillati</taxon>
        <taxon>Actinomycetota</taxon>
        <taxon>Actinomycetes</taxon>
        <taxon>Propionibacteriales</taxon>
        <taxon>Nocardioidaceae</taxon>
        <taxon>Nocardioides</taxon>
    </lineage>
</organism>
<evidence type="ECO:0000255" key="1">
    <source>
        <dbReference type="HAMAP-Rule" id="MF_02106"/>
    </source>
</evidence>
<evidence type="ECO:0000256" key="2">
    <source>
        <dbReference type="SAM" id="MobiDB-lite"/>
    </source>
</evidence>
<accession>A1SK12</accession>
<keyword id="KW-0175">Coiled coil</keyword>
<keyword id="KW-1017">Isopeptide bond</keyword>
<keyword id="KW-1185">Reference proteome</keyword>
<keyword id="KW-0833">Ubl conjugation pathway</keyword>
<gene>
    <name evidence="1" type="primary">pup</name>
    <name type="ordered locus">Noca_2644</name>
</gene>
<comment type="function">
    <text evidence="1">Protein modifier that is covalently attached to lysine residues of substrate proteins, thereby targeting them for proteasomal degradation. The tagging system is termed pupylation.</text>
</comment>
<comment type="pathway">
    <text evidence="1">Protein degradation; proteasomal Pup-dependent pathway.</text>
</comment>
<comment type="subunit">
    <text evidence="1">Strongly interacts with the proteasome-associated ATPase ARC through a hydrophobic interface; the interacting region of Pup lies in its C-terminal half. There is one Pup binding site per ARC hexamer ring.</text>
</comment>
<comment type="domain">
    <text evidence="1">The N-terminal unstructured half of Pup provides a signal required to initiate unfolding and degradation by the proteasome but is not needed for pupylation, while the C-terminal helical half of Pup interacts with ARC to target proteins to the proteasome.</text>
</comment>
<comment type="similarity">
    <text evidence="1">Belongs to the prokaryotic ubiquitin-like protein family.</text>
</comment>
<proteinExistence type="inferred from homology"/>
<reference key="1">
    <citation type="submission" date="2006-12" db="EMBL/GenBank/DDBJ databases">
        <title>Complete sequence of chromosome 1 of Nocardioides sp. JS614.</title>
        <authorList>
            <person name="Copeland A."/>
            <person name="Lucas S."/>
            <person name="Lapidus A."/>
            <person name="Barry K."/>
            <person name="Detter J.C."/>
            <person name="Glavina del Rio T."/>
            <person name="Hammon N."/>
            <person name="Israni S."/>
            <person name="Dalin E."/>
            <person name="Tice H."/>
            <person name="Pitluck S."/>
            <person name="Thompson L.S."/>
            <person name="Brettin T."/>
            <person name="Bruce D."/>
            <person name="Han C."/>
            <person name="Tapia R."/>
            <person name="Schmutz J."/>
            <person name="Larimer F."/>
            <person name="Land M."/>
            <person name="Hauser L."/>
            <person name="Kyrpides N."/>
            <person name="Kim E."/>
            <person name="Mattes T."/>
            <person name="Gossett J."/>
            <person name="Richardson P."/>
        </authorList>
    </citation>
    <scope>NUCLEOTIDE SEQUENCE [LARGE SCALE GENOMIC DNA]</scope>
    <source>
        <strain>ATCC BAA-499 / JS614</strain>
    </source>
</reference>
<dbReference type="EMBL" id="CP000509">
    <property type="protein sequence ID" value="ABL82147.1"/>
    <property type="molecule type" value="Genomic_DNA"/>
</dbReference>
<dbReference type="RefSeq" id="WP_011756087.1">
    <property type="nucleotide sequence ID" value="NC_008699.1"/>
</dbReference>
<dbReference type="SMR" id="A1SK12"/>
<dbReference type="STRING" id="196162.Noca_2644"/>
<dbReference type="KEGG" id="nca:Noca_2644"/>
<dbReference type="eggNOG" id="ENOG50333JS">
    <property type="taxonomic scope" value="Bacteria"/>
</dbReference>
<dbReference type="HOGENOM" id="CLU_183816_2_0_11"/>
<dbReference type="UniPathway" id="UPA00997"/>
<dbReference type="Proteomes" id="UP000000640">
    <property type="component" value="Chromosome"/>
</dbReference>
<dbReference type="GO" id="GO:0070628">
    <property type="term" value="F:proteasome binding"/>
    <property type="evidence" value="ECO:0007669"/>
    <property type="project" value="UniProtKB-UniRule"/>
</dbReference>
<dbReference type="GO" id="GO:0031386">
    <property type="term" value="F:protein tag activity"/>
    <property type="evidence" value="ECO:0007669"/>
    <property type="project" value="UniProtKB-UniRule"/>
</dbReference>
<dbReference type="GO" id="GO:0019941">
    <property type="term" value="P:modification-dependent protein catabolic process"/>
    <property type="evidence" value="ECO:0007669"/>
    <property type="project" value="UniProtKB-UniRule"/>
</dbReference>
<dbReference type="GO" id="GO:0010498">
    <property type="term" value="P:proteasomal protein catabolic process"/>
    <property type="evidence" value="ECO:0007669"/>
    <property type="project" value="UniProtKB-UniRule"/>
</dbReference>
<dbReference type="GO" id="GO:0070490">
    <property type="term" value="P:protein pupylation"/>
    <property type="evidence" value="ECO:0007669"/>
    <property type="project" value="UniProtKB-UniRule"/>
</dbReference>
<dbReference type="HAMAP" id="MF_02106">
    <property type="entry name" value="Pup"/>
    <property type="match status" value="1"/>
</dbReference>
<dbReference type="InterPro" id="IPR008515">
    <property type="entry name" value="Ubiquitin-like_Pup"/>
</dbReference>
<dbReference type="NCBIfam" id="TIGR03687">
    <property type="entry name" value="pupylate_cterm"/>
    <property type="match status" value="1"/>
</dbReference>
<dbReference type="Pfam" id="PF05639">
    <property type="entry name" value="Pup"/>
    <property type="match status" value="1"/>
</dbReference>
<protein>
    <recommendedName>
        <fullName evidence="1">Prokaryotic ubiquitin-like protein Pup</fullName>
    </recommendedName>
    <alternativeName>
        <fullName evidence="1">Bacterial ubiquitin-like modifier</fullName>
    </alternativeName>
</protein>
<name>PUP_NOCSJ</name>